<protein>
    <recommendedName>
        <fullName evidence="1">Small ribosomal subunit protein bS6</fullName>
    </recommendedName>
    <alternativeName>
        <fullName evidence="3">30S ribosomal protein S6</fullName>
    </alternativeName>
</protein>
<keyword id="KW-0687">Ribonucleoprotein</keyword>
<keyword id="KW-0689">Ribosomal protein</keyword>
<keyword id="KW-0694">RNA-binding</keyword>
<keyword id="KW-0699">rRNA-binding</keyword>
<reference key="1">
    <citation type="journal article" date="2010" name="Genome Biol. Evol.">
        <title>Continuing evolution of Burkholderia mallei through genome reduction and large-scale rearrangements.</title>
        <authorList>
            <person name="Losada L."/>
            <person name="Ronning C.M."/>
            <person name="DeShazer D."/>
            <person name="Woods D."/>
            <person name="Fedorova N."/>
            <person name="Kim H.S."/>
            <person name="Shabalina S.A."/>
            <person name="Pearson T.R."/>
            <person name="Brinkac L."/>
            <person name="Tan P."/>
            <person name="Nandi T."/>
            <person name="Crabtree J."/>
            <person name="Badger J."/>
            <person name="Beckstrom-Sternberg S."/>
            <person name="Saqib M."/>
            <person name="Schutzer S.E."/>
            <person name="Keim P."/>
            <person name="Nierman W.C."/>
        </authorList>
    </citation>
    <scope>NUCLEOTIDE SEQUENCE [LARGE SCALE GENOMIC DNA]</scope>
    <source>
        <strain>668</strain>
    </source>
</reference>
<sequence length="124" mass="14306">MRHYEIVFIVHPDQSEQVPAMIERYKSTITSHGGQIHRVEDWGRRQLAYMIEKLAKAHYVCMNIECDQTTLDELEHAFKFNDAVLRHLIVKMKKAETGPSPMMKEVQREEAKKAAAAQPTEAQA</sequence>
<organism>
    <name type="scientific">Burkholderia pseudomallei (strain 668)</name>
    <dbReference type="NCBI Taxonomy" id="320373"/>
    <lineage>
        <taxon>Bacteria</taxon>
        <taxon>Pseudomonadati</taxon>
        <taxon>Pseudomonadota</taxon>
        <taxon>Betaproteobacteria</taxon>
        <taxon>Burkholderiales</taxon>
        <taxon>Burkholderiaceae</taxon>
        <taxon>Burkholderia</taxon>
        <taxon>pseudomallei group</taxon>
    </lineage>
</organism>
<gene>
    <name evidence="1" type="primary">rpsF</name>
    <name type="ordered locus">BURPS668_2252</name>
</gene>
<evidence type="ECO:0000255" key="1">
    <source>
        <dbReference type="HAMAP-Rule" id="MF_00360"/>
    </source>
</evidence>
<evidence type="ECO:0000256" key="2">
    <source>
        <dbReference type="SAM" id="MobiDB-lite"/>
    </source>
</evidence>
<evidence type="ECO:0000305" key="3"/>
<dbReference type="EMBL" id="CP000570">
    <property type="protein sequence ID" value="ABN83550.1"/>
    <property type="molecule type" value="Genomic_DNA"/>
</dbReference>
<dbReference type="RefSeq" id="WP_004193673.1">
    <property type="nucleotide sequence ID" value="NC_009074.1"/>
</dbReference>
<dbReference type="SMR" id="A3NAB6"/>
<dbReference type="GeneID" id="93060533"/>
<dbReference type="KEGG" id="bpd:BURPS668_2252"/>
<dbReference type="HOGENOM" id="CLU_113441_6_1_4"/>
<dbReference type="GO" id="GO:0022627">
    <property type="term" value="C:cytosolic small ribosomal subunit"/>
    <property type="evidence" value="ECO:0007669"/>
    <property type="project" value="TreeGrafter"/>
</dbReference>
<dbReference type="GO" id="GO:0070181">
    <property type="term" value="F:small ribosomal subunit rRNA binding"/>
    <property type="evidence" value="ECO:0007669"/>
    <property type="project" value="TreeGrafter"/>
</dbReference>
<dbReference type="GO" id="GO:0003735">
    <property type="term" value="F:structural constituent of ribosome"/>
    <property type="evidence" value="ECO:0007669"/>
    <property type="project" value="InterPro"/>
</dbReference>
<dbReference type="GO" id="GO:0006412">
    <property type="term" value="P:translation"/>
    <property type="evidence" value="ECO:0007669"/>
    <property type="project" value="UniProtKB-UniRule"/>
</dbReference>
<dbReference type="CDD" id="cd00473">
    <property type="entry name" value="bS6"/>
    <property type="match status" value="1"/>
</dbReference>
<dbReference type="Gene3D" id="3.30.70.60">
    <property type="match status" value="1"/>
</dbReference>
<dbReference type="HAMAP" id="MF_00360">
    <property type="entry name" value="Ribosomal_bS6"/>
    <property type="match status" value="1"/>
</dbReference>
<dbReference type="InterPro" id="IPR000529">
    <property type="entry name" value="Ribosomal_bS6"/>
</dbReference>
<dbReference type="InterPro" id="IPR035980">
    <property type="entry name" value="Ribosomal_bS6_sf"/>
</dbReference>
<dbReference type="InterPro" id="IPR020814">
    <property type="entry name" value="Ribosomal_S6_plastid/chlpt"/>
</dbReference>
<dbReference type="InterPro" id="IPR014717">
    <property type="entry name" value="Transl_elong_EF1B/ribsomal_bS6"/>
</dbReference>
<dbReference type="NCBIfam" id="TIGR00166">
    <property type="entry name" value="S6"/>
    <property type="match status" value="1"/>
</dbReference>
<dbReference type="PANTHER" id="PTHR21011">
    <property type="entry name" value="MITOCHONDRIAL 28S RIBOSOMAL PROTEIN S6"/>
    <property type="match status" value="1"/>
</dbReference>
<dbReference type="PANTHER" id="PTHR21011:SF1">
    <property type="entry name" value="SMALL RIBOSOMAL SUBUNIT PROTEIN BS6M"/>
    <property type="match status" value="1"/>
</dbReference>
<dbReference type="Pfam" id="PF01250">
    <property type="entry name" value="Ribosomal_S6"/>
    <property type="match status" value="1"/>
</dbReference>
<dbReference type="SUPFAM" id="SSF54995">
    <property type="entry name" value="Ribosomal protein S6"/>
    <property type="match status" value="1"/>
</dbReference>
<comment type="function">
    <text evidence="1">Binds together with bS18 to 16S ribosomal RNA.</text>
</comment>
<comment type="similarity">
    <text evidence="1">Belongs to the bacterial ribosomal protein bS6 family.</text>
</comment>
<feature type="chain" id="PRO_1000005233" description="Small ribosomal subunit protein bS6">
    <location>
        <begin position="1"/>
        <end position="124"/>
    </location>
</feature>
<feature type="region of interest" description="Disordered" evidence="2">
    <location>
        <begin position="96"/>
        <end position="124"/>
    </location>
</feature>
<feature type="compositionally biased region" description="Low complexity" evidence="2">
    <location>
        <begin position="114"/>
        <end position="124"/>
    </location>
</feature>
<proteinExistence type="inferred from homology"/>
<accession>A3NAB6</accession>
<name>RS6_BURP6</name>